<gene>
    <name type="primary">NPPC</name>
    <name type="synonym">CNP</name>
</gene>
<name>ANFC_SHEEP</name>
<sequence>MHLSQLLACALLLSLLSLRPSEAKPGAPPKVPRTPPGEEVAEPQAAGGGQKKGDKTPGGGGANLKDDRSRLLRDLRVDTKSRAAWTRLLHEHPNARKYKGGNKKGLSKGCFGLKLDRIGSMSGLGC</sequence>
<accession>P56283</accession>
<dbReference type="EMBL" id="AF037467">
    <property type="protein sequence ID" value="AAB92261.1"/>
    <property type="molecule type" value="Genomic_DNA"/>
</dbReference>
<dbReference type="RefSeq" id="NP_001009479.1">
    <property type="nucleotide sequence ID" value="NM_001009479.1"/>
</dbReference>
<dbReference type="RefSeq" id="XP_027819692.1">
    <property type="nucleotide sequence ID" value="XM_027963891.3"/>
</dbReference>
<dbReference type="RefSeq" id="XP_042098604.1">
    <property type="nucleotide sequence ID" value="XM_042242670.2"/>
</dbReference>
<dbReference type="STRING" id="9940.ENSOARP00000001044"/>
<dbReference type="PaxDb" id="9940-ENSOARP00000001044"/>
<dbReference type="GeneID" id="493773"/>
<dbReference type="KEGG" id="oas:493773"/>
<dbReference type="CTD" id="4880"/>
<dbReference type="eggNOG" id="ENOG502S2QY">
    <property type="taxonomic scope" value="Eukaryota"/>
</dbReference>
<dbReference type="OrthoDB" id="8911465at2759"/>
<dbReference type="Proteomes" id="UP000002356">
    <property type="component" value="Unplaced"/>
</dbReference>
<dbReference type="GO" id="GO:0005576">
    <property type="term" value="C:extracellular region"/>
    <property type="evidence" value="ECO:0007669"/>
    <property type="project" value="UniProtKB-SubCell"/>
</dbReference>
<dbReference type="GO" id="GO:0005179">
    <property type="term" value="F:hormone activity"/>
    <property type="evidence" value="ECO:0007669"/>
    <property type="project" value="UniProtKB-KW"/>
</dbReference>
<dbReference type="GO" id="GO:0005102">
    <property type="term" value="F:signaling receptor binding"/>
    <property type="evidence" value="ECO:0000250"/>
    <property type="project" value="AgBase"/>
</dbReference>
<dbReference type="GO" id="GO:0097746">
    <property type="term" value="P:blood vessel diameter maintenance"/>
    <property type="evidence" value="ECO:0007669"/>
    <property type="project" value="UniProtKB-KW"/>
</dbReference>
<dbReference type="GO" id="GO:0006182">
    <property type="term" value="P:cGMP biosynthetic process"/>
    <property type="evidence" value="ECO:0000250"/>
    <property type="project" value="UniProtKB"/>
</dbReference>
<dbReference type="GO" id="GO:0003418">
    <property type="term" value="P:growth plate cartilage chondrocyte differentiation"/>
    <property type="evidence" value="ECO:0000250"/>
    <property type="project" value="UniProtKB"/>
</dbReference>
<dbReference type="GO" id="GO:0003419">
    <property type="term" value="P:growth plate cartilage chondrocyte proliferation"/>
    <property type="evidence" value="ECO:0000250"/>
    <property type="project" value="UniProtKB"/>
</dbReference>
<dbReference type="GO" id="GO:0001503">
    <property type="term" value="P:ossification"/>
    <property type="evidence" value="ECO:0007669"/>
    <property type="project" value="UniProtKB-KW"/>
</dbReference>
<dbReference type="GO" id="GO:0007168">
    <property type="term" value="P:receptor guanylyl cyclase signaling pathway"/>
    <property type="evidence" value="ECO:0000250"/>
    <property type="project" value="UniProtKB"/>
</dbReference>
<dbReference type="InterPro" id="IPR002406">
    <property type="entry name" value="C_natriurtcpep"/>
</dbReference>
<dbReference type="InterPro" id="IPR000663">
    <property type="entry name" value="Natr_peptide"/>
</dbReference>
<dbReference type="InterPro" id="IPR030480">
    <property type="entry name" value="Natr_peptide_CS"/>
</dbReference>
<dbReference type="PANTHER" id="PTHR12167">
    <property type="entry name" value="C-TYPE NATRIURETIC PEPTIDE"/>
    <property type="match status" value="1"/>
</dbReference>
<dbReference type="PANTHER" id="PTHR12167:SF2">
    <property type="entry name" value="C-TYPE NATRIURETIC PEPTIDE"/>
    <property type="match status" value="1"/>
</dbReference>
<dbReference type="Pfam" id="PF00212">
    <property type="entry name" value="ANP"/>
    <property type="match status" value="1"/>
</dbReference>
<dbReference type="PRINTS" id="PR00713">
    <property type="entry name" value="CNATPEPTIDE"/>
</dbReference>
<dbReference type="PRINTS" id="PR00710">
    <property type="entry name" value="NATPEPTIDES"/>
</dbReference>
<dbReference type="SMART" id="SM00183">
    <property type="entry name" value="NAT_PEP"/>
    <property type="match status" value="1"/>
</dbReference>
<dbReference type="PROSITE" id="PS00263">
    <property type="entry name" value="NATRIURETIC_PEPTIDE"/>
    <property type="match status" value="1"/>
</dbReference>
<protein>
    <recommendedName>
        <fullName>C-type natriuretic peptide</fullName>
    </recommendedName>
    <component>
        <recommendedName>
            <fullName>CNP-22</fullName>
        </recommendedName>
    </component>
    <component>
        <recommendedName>
            <fullName>CNP-29</fullName>
        </recommendedName>
    </component>
    <component>
        <recommendedName>
            <fullName>CNP-53</fullName>
        </recommendedName>
    </component>
</protein>
<evidence type="ECO:0000250" key="1"/>
<evidence type="ECO:0000250" key="2">
    <source>
        <dbReference type="UniProtKB" id="P23582"/>
    </source>
</evidence>
<evidence type="ECO:0000250" key="3">
    <source>
        <dbReference type="UniProtKB" id="Q61839"/>
    </source>
</evidence>
<evidence type="ECO:0000255" key="4"/>
<evidence type="ECO:0000256" key="5">
    <source>
        <dbReference type="SAM" id="MobiDB-lite"/>
    </source>
</evidence>
<evidence type="ECO:0000305" key="6"/>
<organism>
    <name type="scientific">Ovis aries</name>
    <name type="common">Sheep</name>
    <dbReference type="NCBI Taxonomy" id="9940"/>
    <lineage>
        <taxon>Eukaryota</taxon>
        <taxon>Metazoa</taxon>
        <taxon>Chordata</taxon>
        <taxon>Craniata</taxon>
        <taxon>Vertebrata</taxon>
        <taxon>Euteleostomi</taxon>
        <taxon>Mammalia</taxon>
        <taxon>Eutheria</taxon>
        <taxon>Laurasiatheria</taxon>
        <taxon>Artiodactyla</taxon>
        <taxon>Ruminantia</taxon>
        <taxon>Pecora</taxon>
        <taxon>Bovidae</taxon>
        <taxon>Caprinae</taxon>
        <taxon>Ovis</taxon>
    </lineage>
</organism>
<comment type="function">
    <molecule>CNP-22</molecule>
    <text evidence="2 3">Hormone which plays a role in endochondral ossification through regulation of cartilaginous growth plate chondrocytes proliferation and differentiation (By similarity). May also be vasoactive and natriuretic. Acts by specifically binding and stimulating NPR2 to produce cGMP. Binds the clearance receptor NPR3 (By similarity).</text>
</comment>
<comment type="subcellular location">
    <subcellularLocation>
        <location>Secreted</location>
    </subcellularLocation>
</comment>
<comment type="PTM">
    <molecule>CNP-22</molecule>
    <text evidence="2">Degraded by IDE (in vitro).</text>
</comment>
<comment type="similarity">
    <text evidence="6">Belongs to the natriuretic peptide family.</text>
</comment>
<keyword id="KW-0165">Cleavage on pair of basic residues</keyword>
<keyword id="KW-1015">Disulfide bond</keyword>
<keyword id="KW-0372">Hormone</keyword>
<keyword id="KW-0892">Osteogenesis</keyword>
<keyword id="KW-1185">Reference proteome</keyword>
<keyword id="KW-0964">Secreted</keyword>
<keyword id="KW-0732">Signal</keyword>
<keyword id="KW-0838">Vasoactive</keyword>
<reference key="1">
    <citation type="journal article" date="1999" name="Domest. Anim. Endocrinol.">
        <title>The characterization of ovine genes for atrial, brain, and C-type natriuretic peptides.</title>
        <authorList>
            <person name="Aitken G.D."/>
            <person name="Raizis A.M."/>
            <person name="Yandle T.G."/>
            <person name="George P.M."/>
            <person name="Espiner E.A."/>
            <person name="Cameron V.A."/>
        </authorList>
    </citation>
    <scope>NUCLEOTIDE SEQUENCE [GENOMIC DNA]</scope>
</reference>
<feature type="signal peptide" evidence="4">
    <location>
        <begin position="1"/>
        <end position="23"/>
    </location>
</feature>
<feature type="propeptide" id="PRO_0000001569" evidence="4">
    <location>
        <begin position="24"/>
        <end position="73"/>
    </location>
</feature>
<feature type="peptide" id="PRO_0000001570" description="CNP-53" evidence="1">
    <location>
        <begin position="74"/>
        <end position="126"/>
    </location>
</feature>
<feature type="peptide" id="PRO_0000001571" description="CNP-29" evidence="1">
    <location>
        <begin position="98"/>
        <end position="126"/>
    </location>
</feature>
<feature type="peptide" id="PRO_0000001572" description="CNP-22">
    <location>
        <begin position="105"/>
        <end position="126"/>
    </location>
</feature>
<feature type="region of interest" description="Disordered" evidence="5">
    <location>
        <begin position="20"/>
        <end position="71"/>
    </location>
</feature>
<feature type="compositionally biased region" description="Pro residues" evidence="5">
    <location>
        <begin position="26"/>
        <end position="35"/>
    </location>
</feature>
<feature type="compositionally biased region" description="Gly residues" evidence="5">
    <location>
        <begin position="46"/>
        <end position="62"/>
    </location>
</feature>
<feature type="disulfide bond" evidence="1">
    <location>
        <begin position="110"/>
        <end position="126"/>
    </location>
</feature>
<proteinExistence type="inferred from homology"/>